<keyword id="KW-0210">Decarboxylase</keyword>
<keyword id="KW-0285">Flavoprotein</keyword>
<keyword id="KW-0288">FMN</keyword>
<keyword id="KW-0436">Ligase</keyword>
<keyword id="KW-0456">Lyase</keyword>
<keyword id="KW-0460">Magnesium</keyword>
<keyword id="KW-0479">Metal-binding</keyword>
<keyword id="KW-0511">Multifunctional enzyme</keyword>
<keyword id="KW-1185">Reference proteome</keyword>
<organism>
    <name type="scientific">Haemophilus influenzae (strain ATCC 51907 / DSM 11121 / KW20 / Rd)</name>
    <dbReference type="NCBI Taxonomy" id="71421"/>
    <lineage>
        <taxon>Bacteria</taxon>
        <taxon>Pseudomonadati</taxon>
        <taxon>Pseudomonadota</taxon>
        <taxon>Gammaproteobacteria</taxon>
        <taxon>Pasteurellales</taxon>
        <taxon>Pasteurellaceae</taxon>
        <taxon>Haemophilus</taxon>
    </lineage>
</organism>
<proteinExistence type="inferred from homology"/>
<reference key="1">
    <citation type="journal article" date="1995" name="Science">
        <title>Whole-genome random sequencing and assembly of Haemophilus influenzae Rd.</title>
        <authorList>
            <person name="Fleischmann R.D."/>
            <person name="Adams M.D."/>
            <person name="White O."/>
            <person name="Clayton R.A."/>
            <person name="Kirkness E.F."/>
            <person name="Kerlavage A.R."/>
            <person name="Bult C.J."/>
            <person name="Tomb J.-F."/>
            <person name="Dougherty B.A."/>
            <person name="Merrick J.M."/>
            <person name="McKenney K."/>
            <person name="Sutton G.G."/>
            <person name="FitzHugh W."/>
            <person name="Fields C.A."/>
            <person name="Gocayne J.D."/>
            <person name="Scott J.D."/>
            <person name="Shirley R."/>
            <person name="Liu L.-I."/>
            <person name="Glodek A."/>
            <person name="Kelley J.M."/>
            <person name="Weidman J.F."/>
            <person name="Phillips C.A."/>
            <person name="Spriggs T."/>
            <person name="Hedblom E."/>
            <person name="Cotton M.D."/>
            <person name="Utterback T.R."/>
            <person name="Hanna M.C."/>
            <person name="Nguyen D.T."/>
            <person name="Saudek D.M."/>
            <person name="Brandon R.C."/>
            <person name="Fine L.D."/>
            <person name="Fritchman J.L."/>
            <person name="Fuhrmann J.L."/>
            <person name="Geoghagen N.S.M."/>
            <person name="Gnehm C.L."/>
            <person name="McDonald L.A."/>
            <person name="Small K.V."/>
            <person name="Fraser C.M."/>
            <person name="Smith H.O."/>
            <person name="Venter J.C."/>
        </authorList>
    </citation>
    <scope>NUCLEOTIDE SEQUENCE [LARGE SCALE GENOMIC DNA]</scope>
    <source>
        <strain>ATCC 51907 / DSM 11121 / KW20 / Rd</strain>
    </source>
</reference>
<protein>
    <recommendedName>
        <fullName evidence="1">Coenzyme A biosynthesis bifunctional protein CoaBC</fullName>
    </recommendedName>
    <alternativeName>
        <fullName evidence="1">DNA/pantothenate metabolism flavoprotein</fullName>
    </alternativeName>
    <alternativeName>
        <fullName evidence="1">Phosphopantothenoylcysteine synthetase/decarboxylase</fullName>
        <shortName evidence="1">PPCS-PPCDC</shortName>
    </alternativeName>
    <domain>
        <recommendedName>
            <fullName evidence="1">Phosphopantothenoylcysteine decarboxylase</fullName>
            <shortName evidence="1">PPC decarboxylase</shortName>
            <shortName evidence="1">PPC-DC</shortName>
            <ecNumber evidence="1">4.1.1.36</ecNumber>
        </recommendedName>
        <alternativeName>
            <fullName evidence="1">CoaC</fullName>
        </alternativeName>
    </domain>
    <domain>
        <recommendedName>
            <fullName evidence="1">Phosphopantothenate--cysteine ligase</fullName>
            <ecNumber evidence="1">6.3.2.5</ecNumber>
        </recommendedName>
        <alternativeName>
            <fullName evidence="1">CoaB</fullName>
        </alternativeName>
        <alternativeName>
            <fullName evidence="1">Phosphopantothenoylcysteine synthetase</fullName>
            <shortName evidence="1">PPC synthetase</shortName>
            <shortName evidence="1">PPC-S</shortName>
        </alternativeName>
    </domain>
</protein>
<feature type="chain" id="PRO_0000232693" description="Coenzyme A biosynthesis bifunctional protein CoaBC">
    <location>
        <begin position="1"/>
        <end position="400"/>
    </location>
</feature>
<feature type="region of interest" description="Phosphopantothenoylcysteine decarboxylase" evidence="1">
    <location>
        <begin position="1"/>
        <end position="190"/>
    </location>
</feature>
<feature type="region of interest" description="Phosphopantothenate--cysteine ligase" evidence="1">
    <location>
        <begin position="191"/>
        <end position="400"/>
    </location>
</feature>
<feature type="active site" description="Proton donor" evidence="1">
    <location>
        <position position="158"/>
    </location>
</feature>
<feature type="binding site" evidence="1">
    <location>
        <begin position="273"/>
        <end position="275"/>
    </location>
    <ligand>
        <name>CTP</name>
        <dbReference type="ChEBI" id="CHEBI:37563"/>
    </ligand>
</feature>
<feature type="binding site" evidence="1">
    <location>
        <position position="279"/>
    </location>
    <ligand>
        <name>CTP</name>
        <dbReference type="ChEBI" id="CHEBI:37563"/>
    </ligand>
</feature>
<feature type="binding site" evidence="1">
    <location>
        <position position="289"/>
    </location>
    <ligand>
        <name>CTP</name>
        <dbReference type="ChEBI" id="CHEBI:37563"/>
    </ligand>
</feature>
<feature type="binding site" evidence="1">
    <location>
        <begin position="305"/>
        <end position="308"/>
    </location>
    <ligand>
        <name>CTP</name>
        <dbReference type="ChEBI" id="CHEBI:37563"/>
    </ligand>
</feature>
<feature type="binding site" evidence="1">
    <location>
        <position position="324"/>
    </location>
    <ligand>
        <name>CTP</name>
        <dbReference type="ChEBI" id="CHEBI:37563"/>
    </ligand>
</feature>
<feature type="binding site" evidence="1">
    <location>
        <position position="338"/>
    </location>
    <ligand>
        <name>CTP</name>
        <dbReference type="ChEBI" id="CHEBI:37563"/>
    </ligand>
</feature>
<feature type="binding site" evidence="1">
    <location>
        <position position="342"/>
    </location>
    <ligand>
        <name>CTP</name>
        <dbReference type="ChEBI" id="CHEBI:37563"/>
    </ligand>
</feature>
<sequence>MKLNGKHIVVGITGGIAAYKTIELIRLLRKAEAEVRVVLTPAAAEFVTPLTLQAISGNAVSQSLLDPQAELAMGHIELAKWADAIIIAPASADFIARLTIGMANDLLSTICLATNAPIFLAPAMNQQMYHQSITQQNLTTLQTRGIELIGPNSGFQACGDMGKGRMSEPEEIFTALSDFFSQKQDLQGLNVSITAGPTREAIDPVRYISNHSSGKMGFAIAEAFAKRGANVTLIAGPVNLTTPKNVNRINVISAQEMWQASLESAVKNQIFIGCAAVADYRVTEVAEQKIKKSGDEISIKLIKNPDIISDVGHLKTHRPFTVGFAAETQNVDDYAKDKLERKNLDMICANDVSGGQVFNADENALQLFWKNGHKKLSLKSKVELAADLVNEIIERYQKTL</sequence>
<name>COABC_HAEIN</name>
<evidence type="ECO:0000255" key="1">
    <source>
        <dbReference type="HAMAP-Rule" id="MF_02225"/>
    </source>
</evidence>
<dbReference type="EC" id="4.1.1.36" evidence="1"/>
<dbReference type="EC" id="6.3.2.5" evidence="1"/>
<dbReference type="EMBL" id="L42023">
    <property type="protein sequence ID" value="AAC22614.1"/>
    <property type="molecule type" value="Genomic_DNA"/>
</dbReference>
<dbReference type="PIR" id="G64104">
    <property type="entry name" value="G64104"/>
</dbReference>
<dbReference type="RefSeq" id="NP_439114.1">
    <property type="nucleotide sequence ID" value="NC_000907.1"/>
</dbReference>
<dbReference type="SMR" id="P44953"/>
<dbReference type="STRING" id="71421.HI_0953"/>
<dbReference type="EnsemblBacteria" id="AAC22614">
    <property type="protein sequence ID" value="AAC22614"/>
    <property type="gene ID" value="HI_0953"/>
</dbReference>
<dbReference type="KEGG" id="hin:HI_0953"/>
<dbReference type="PATRIC" id="fig|71421.8.peg.995"/>
<dbReference type="eggNOG" id="COG0452">
    <property type="taxonomic scope" value="Bacteria"/>
</dbReference>
<dbReference type="HOGENOM" id="CLU_033319_0_1_6"/>
<dbReference type="OrthoDB" id="9802554at2"/>
<dbReference type="PhylomeDB" id="P44953"/>
<dbReference type="BioCyc" id="HINF71421:G1GJ1-994-MONOMER"/>
<dbReference type="UniPathway" id="UPA00241">
    <property type="reaction ID" value="UER00353"/>
</dbReference>
<dbReference type="UniPathway" id="UPA00241">
    <property type="reaction ID" value="UER00354"/>
</dbReference>
<dbReference type="Proteomes" id="UP000000579">
    <property type="component" value="Chromosome"/>
</dbReference>
<dbReference type="GO" id="GO:0071513">
    <property type="term" value="C:phosphopantothenoylcysteine decarboxylase complex"/>
    <property type="evidence" value="ECO:0000318"/>
    <property type="project" value="GO_Central"/>
</dbReference>
<dbReference type="GO" id="GO:0010181">
    <property type="term" value="F:FMN binding"/>
    <property type="evidence" value="ECO:0000318"/>
    <property type="project" value="GO_Central"/>
</dbReference>
<dbReference type="GO" id="GO:0046872">
    <property type="term" value="F:metal ion binding"/>
    <property type="evidence" value="ECO:0007669"/>
    <property type="project" value="UniProtKB-KW"/>
</dbReference>
<dbReference type="GO" id="GO:0004632">
    <property type="term" value="F:phosphopantothenate--cysteine ligase activity"/>
    <property type="evidence" value="ECO:0007669"/>
    <property type="project" value="UniProtKB-UniRule"/>
</dbReference>
<dbReference type="GO" id="GO:0004633">
    <property type="term" value="F:phosphopantothenoylcysteine decarboxylase activity"/>
    <property type="evidence" value="ECO:0000318"/>
    <property type="project" value="GO_Central"/>
</dbReference>
<dbReference type="GO" id="GO:0015937">
    <property type="term" value="P:coenzyme A biosynthetic process"/>
    <property type="evidence" value="ECO:0000318"/>
    <property type="project" value="GO_Central"/>
</dbReference>
<dbReference type="GO" id="GO:0015941">
    <property type="term" value="P:pantothenate catabolic process"/>
    <property type="evidence" value="ECO:0007669"/>
    <property type="project" value="InterPro"/>
</dbReference>
<dbReference type="Gene3D" id="3.40.50.10300">
    <property type="entry name" value="CoaB-like"/>
    <property type="match status" value="1"/>
</dbReference>
<dbReference type="Gene3D" id="3.40.50.1950">
    <property type="entry name" value="Flavin prenyltransferase-like"/>
    <property type="match status" value="1"/>
</dbReference>
<dbReference type="HAMAP" id="MF_02225">
    <property type="entry name" value="CoaBC"/>
    <property type="match status" value="1"/>
</dbReference>
<dbReference type="InterPro" id="IPR035929">
    <property type="entry name" value="CoaB-like_sf"/>
</dbReference>
<dbReference type="InterPro" id="IPR005252">
    <property type="entry name" value="CoaBC"/>
</dbReference>
<dbReference type="InterPro" id="IPR007085">
    <property type="entry name" value="DNA/pantothenate-metab_flavo_C"/>
</dbReference>
<dbReference type="InterPro" id="IPR036551">
    <property type="entry name" value="Flavin_trans-like"/>
</dbReference>
<dbReference type="InterPro" id="IPR003382">
    <property type="entry name" value="Flavoprotein"/>
</dbReference>
<dbReference type="NCBIfam" id="TIGR00521">
    <property type="entry name" value="coaBC_dfp"/>
    <property type="match status" value="1"/>
</dbReference>
<dbReference type="PANTHER" id="PTHR14359">
    <property type="entry name" value="HOMO-OLIGOMERIC FLAVIN CONTAINING CYS DECARBOXYLASE FAMILY"/>
    <property type="match status" value="1"/>
</dbReference>
<dbReference type="PANTHER" id="PTHR14359:SF6">
    <property type="entry name" value="PHOSPHOPANTOTHENOYLCYSTEINE DECARBOXYLASE"/>
    <property type="match status" value="1"/>
</dbReference>
<dbReference type="Pfam" id="PF04127">
    <property type="entry name" value="DFP"/>
    <property type="match status" value="1"/>
</dbReference>
<dbReference type="Pfam" id="PF02441">
    <property type="entry name" value="Flavoprotein"/>
    <property type="match status" value="1"/>
</dbReference>
<dbReference type="SUPFAM" id="SSF102645">
    <property type="entry name" value="CoaB-like"/>
    <property type="match status" value="1"/>
</dbReference>
<dbReference type="SUPFAM" id="SSF52507">
    <property type="entry name" value="Homo-oligomeric flavin-containing Cys decarboxylases, HFCD"/>
    <property type="match status" value="1"/>
</dbReference>
<gene>
    <name evidence="1" type="primary">coaBC</name>
    <name type="synonym">dfp</name>
    <name type="ordered locus">HI_0953</name>
</gene>
<accession>P44953</accession>
<comment type="function">
    <text evidence="1">Catalyzes two sequential steps in the biosynthesis of coenzyme A. In the first step cysteine is conjugated to 4'-phosphopantothenate to form 4-phosphopantothenoylcysteine. In the second step the latter compound is decarboxylated to form 4'-phosphopantotheine.</text>
</comment>
<comment type="catalytic activity">
    <reaction evidence="1">
        <text>N-[(R)-4-phosphopantothenoyl]-L-cysteine + H(+) = (R)-4'-phosphopantetheine + CO2</text>
        <dbReference type="Rhea" id="RHEA:16793"/>
        <dbReference type="ChEBI" id="CHEBI:15378"/>
        <dbReference type="ChEBI" id="CHEBI:16526"/>
        <dbReference type="ChEBI" id="CHEBI:59458"/>
        <dbReference type="ChEBI" id="CHEBI:61723"/>
        <dbReference type="EC" id="4.1.1.36"/>
    </reaction>
</comment>
<comment type="catalytic activity">
    <reaction evidence="1">
        <text>(R)-4'-phosphopantothenate + L-cysteine + CTP = N-[(R)-4-phosphopantothenoyl]-L-cysteine + CMP + diphosphate + H(+)</text>
        <dbReference type="Rhea" id="RHEA:19397"/>
        <dbReference type="ChEBI" id="CHEBI:10986"/>
        <dbReference type="ChEBI" id="CHEBI:15378"/>
        <dbReference type="ChEBI" id="CHEBI:33019"/>
        <dbReference type="ChEBI" id="CHEBI:35235"/>
        <dbReference type="ChEBI" id="CHEBI:37563"/>
        <dbReference type="ChEBI" id="CHEBI:59458"/>
        <dbReference type="ChEBI" id="CHEBI:60377"/>
        <dbReference type="EC" id="6.3.2.5"/>
    </reaction>
</comment>
<comment type="cofactor">
    <cofactor evidence="1">
        <name>Mg(2+)</name>
        <dbReference type="ChEBI" id="CHEBI:18420"/>
    </cofactor>
</comment>
<comment type="cofactor">
    <cofactor evidence="1">
        <name>FMN</name>
        <dbReference type="ChEBI" id="CHEBI:58210"/>
    </cofactor>
    <text evidence="1">Binds 1 FMN per subunit.</text>
</comment>
<comment type="pathway">
    <text evidence="1">Cofactor biosynthesis; coenzyme A biosynthesis; CoA from (R)-pantothenate: step 2/5.</text>
</comment>
<comment type="pathway">
    <text evidence="1">Cofactor biosynthesis; coenzyme A biosynthesis; CoA from (R)-pantothenate: step 3/5.</text>
</comment>
<comment type="similarity">
    <text evidence="1">In the N-terminal section; belongs to the HFCD (homo-oligomeric flavin containing Cys decarboxylase) superfamily.</text>
</comment>
<comment type="similarity">
    <text evidence="1">In the C-terminal section; belongs to the PPC synthetase family.</text>
</comment>